<comment type="function">
    <text evidence="1">Binds as a heterodimer with protein bS6 to the central domain of the 16S rRNA, where it helps stabilize the platform of the 30S subunit.</text>
</comment>
<comment type="subunit">
    <text evidence="1">Part of the 30S ribosomal subunit. Forms a tight heterodimer with protein bS6.</text>
</comment>
<comment type="similarity">
    <text evidence="1">Belongs to the bacterial ribosomal protein bS18 family.</text>
</comment>
<name>RS18_BRUME</name>
<proteinExistence type="inferred from homology"/>
<feature type="chain" id="PRO_0000111128" description="Small ribosomal subunit protein bS18">
    <location>
        <begin position="1"/>
        <end position="82"/>
    </location>
</feature>
<feature type="region of interest" description="Disordered" evidence="2">
    <location>
        <begin position="1"/>
        <end position="20"/>
    </location>
</feature>
<evidence type="ECO:0000255" key="1">
    <source>
        <dbReference type="HAMAP-Rule" id="MF_00270"/>
    </source>
</evidence>
<evidence type="ECO:0000256" key="2">
    <source>
        <dbReference type="SAM" id="MobiDB-lite"/>
    </source>
</evidence>
<evidence type="ECO:0000305" key="3"/>
<keyword id="KW-0687">Ribonucleoprotein</keyword>
<keyword id="KW-0689">Ribosomal protein</keyword>
<keyword id="KW-0694">RNA-binding</keyword>
<keyword id="KW-0699">rRNA-binding</keyword>
<dbReference type="EMBL" id="AE008917">
    <property type="protein sequence ID" value="AAL52662.1"/>
    <property type="molecule type" value="Genomic_DNA"/>
</dbReference>
<dbReference type="PIR" id="AC3437">
    <property type="entry name" value="AC3437"/>
</dbReference>
<dbReference type="RefSeq" id="WP_002963610.1">
    <property type="nucleotide sequence ID" value="NZ_GG703778.1"/>
</dbReference>
<dbReference type="SMR" id="P66453"/>
<dbReference type="GeneID" id="97914641"/>
<dbReference type="KEGG" id="bme:BMEI1481"/>
<dbReference type="KEGG" id="bmel:DK63_2009"/>
<dbReference type="PATRIC" id="fig|224914.52.peg.2111"/>
<dbReference type="eggNOG" id="COG0238">
    <property type="taxonomic scope" value="Bacteria"/>
</dbReference>
<dbReference type="Proteomes" id="UP000000419">
    <property type="component" value="Chromosome I"/>
</dbReference>
<dbReference type="GO" id="GO:0022627">
    <property type="term" value="C:cytosolic small ribosomal subunit"/>
    <property type="evidence" value="ECO:0007669"/>
    <property type="project" value="TreeGrafter"/>
</dbReference>
<dbReference type="GO" id="GO:0070181">
    <property type="term" value="F:small ribosomal subunit rRNA binding"/>
    <property type="evidence" value="ECO:0007669"/>
    <property type="project" value="TreeGrafter"/>
</dbReference>
<dbReference type="GO" id="GO:0003735">
    <property type="term" value="F:structural constituent of ribosome"/>
    <property type="evidence" value="ECO:0007669"/>
    <property type="project" value="InterPro"/>
</dbReference>
<dbReference type="GO" id="GO:0006412">
    <property type="term" value="P:translation"/>
    <property type="evidence" value="ECO:0007669"/>
    <property type="project" value="UniProtKB-UniRule"/>
</dbReference>
<dbReference type="Gene3D" id="4.10.640.10">
    <property type="entry name" value="Ribosomal protein S18"/>
    <property type="match status" value="1"/>
</dbReference>
<dbReference type="HAMAP" id="MF_00270">
    <property type="entry name" value="Ribosomal_bS18"/>
    <property type="match status" value="1"/>
</dbReference>
<dbReference type="InterPro" id="IPR001648">
    <property type="entry name" value="Ribosomal_bS18"/>
</dbReference>
<dbReference type="InterPro" id="IPR018275">
    <property type="entry name" value="Ribosomal_bS18_CS"/>
</dbReference>
<dbReference type="InterPro" id="IPR036870">
    <property type="entry name" value="Ribosomal_bS18_sf"/>
</dbReference>
<dbReference type="NCBIfam" id="TIGR00165">
    <property type="entry name" value="S18"/>
    <property type="match status" value="1"/>
</dbReference>
<dbReference type="PANTHER" id="PTHR13479">
    <property type="entry name" value="30S RIBOSOMAL PROTEIN S18"/>
    <property type="match status" value="1"/>
</dbReference>
<dbReference type="PANTHER" id="PTHR13479:SF40">
    <property type="entry name" value="SMALL RIBOSOMAL SUBUNIT PROTEIN BS18M"/>
    <property type="match status" value="1"/>
</dbReference>
<dbReference type="Pfam" id="PF01084">
    <property type="entry name" value="Ribosomal_S18"/>
    <property type="match status" value="1"/>
</dbReference>
<dbReference type="PRINTS" id="PR00974">
    <property type="entry name" value="RIBOSOMALS18"/>
</dbReference>
<dbReference type="SUPFAM" id="SSF46911">
    <property type="entry name" value="Ribosomal protein S18"/>
    <property type="match status" value="1"/>
</dbReference>
<dbReference type="PROSITE" id="PS00057">
    <property type="entry name" value="RIBOSOMAL_S18"/>
    <property type="match status" value="1"/>
</dbReference>
<organism>
    <name type="scientific">Brucella melitensis biotype 1 (strain ATCC 23456 / CCUG 17765 / NCTC 10094 / 16M)</name>
    <dbReference type="NCBI Taxonomy" id="224914"/>
    <lineage>
        <taxon>Bacteria</taxon>
        <taxon>Pseudomonadati</taxon>
        <taxon>Pseudomonadota</taxon>
        <taxon>Alphaproteobacteria</taxon>
        <taxon>Hyphomicrobiales</taxon>
        <taxon>Brucellaceae</taxon>
        <taxon>Brucella/Ochrobactrum group</taxon>
        <taxon>Brucella</taxon>
    </lineage>
</organism>
<accession>P66453</accession>
<accession>Q8YFN9</accession>
<sequence>MVDINQIPTRRPFHRRRKTCPFSGANAPKIDYKDVKLLQRYISERGKIVPSRITAVSQKKQRELAKAIKRARFLGLLPYVVK</sequence>
<protein>
    <recommendedName>
        <fullName evidence="1">Small ribosomal subunit protein bS18</fullName>
    </recommendedName>
    <alternativeName>
        <fullName evidence="3">30S ribosomal protein S18</fullName>
    </alternativeName>
</protein>
<gene>
    <name evidence="1" type="primary">rpsR</name>
    <name type="ordered locus">BMEI1481</name>
</gene>
<reference key="1">
    <citation type="journal article" date="2002" name="Proc. Natl. Acad. Sci. U.S.A.">
        <title>The genome sequence of the facultative intracellular pathogen Brucella melitensis.</title>
        <authorList>
            <person name="DelVecchio V.G."/>
            <person name="Kapatral V."/>
            <person name="Redkar R.J."/>
            <person name="Patra G."/>
            <person name="Mujer C."/>
            <person name="Los T."/>
            <person name="Ivanova N."/>
            <person name="Anderson I."/>
            <person name="Bhattacharyya A."/>
            <person name="Lykidis A."/>
            <person name="Reznik G."/>
            <person name="Jablonski L."/>
            <person name="Larsen N."/>
            <person name="D'Souza M."/>
            <person name="Bernal A."/>
            <person name="Mazur M."/>
            <person name="Goltsman E."/>
            <person name="Selkov E."/>
            <person name="Elzer P.H."/>
            <person name="Hagius S."/>
            <person name="O'Callaghan D."/>
            <person name="Letesson J.-J."/>
            <person name="Haselkorn R."/>
            <person name="Kyrpides N.C."/>
            <person name="Overbeek R."/>
        </authorList>
    </citation>
    <scope>NUCLEOTIDE SEQUENCE [LARGE SCALE GENOMIC DNA]</scope>
    <source>
        <strain>ATCC 23456 / CCUG 17765 / NCTC 10094 / 16M</strain>
    </source>
</reference>